<dbReference type="EC" id="3.4.24.-" evidence="4"/>
<dbReference type="EMBL" id="AE014134">
    <property type="protein sequence ID" value="AAF53469.1"/>
    <property type="molecule type" value="Genomic_DNA"/>
</dbReference>
<dbReference type="EMBL" id="AY113214">
    <property type="protein sequence ID" value="AAM29219.1"/>
    <property type="molecule type" value="mRNA"/>
</dbReference>
<dbReference type="EMBL" id="BT150134">
    <property type="protein sequence ID" value="AGO63477.1"/>
    <property type="status" value="ALT_INIT"/>
    <property type="molecule type" value="mRNA"/>
</dbReference>
<dbReference type="RefSeq" id="NP_609756.1">
    <property type="nucleotide sequence ID" value="NM_135912.3"/>
</dbReference>
<dbReference type="SMR" id="Q9VJN9"/>
<dbReference type="STRING" id="7227.FBpp0080342"/>
<dbReference type="MEROPS" id="M12.330"/>
<dbReference type="GlyCosmos" id="Q9VJN9">
    <property type="glycosylation" value="3 sites, No reported glycans"/>
</dbReference>
<dbReference type="GlyGen" id="Q9VJN9">
    <property type="glycosylation" value="3 sites"/>
</dbReference>
<dbReference type="PaxDb" id="7227-FBpp0080342"/>
<dbReference type="EnsemblMetazoa" id="FBtr0080784">
    <property type="protein sequence ID" value="FBpp0080342"/>
    <property type="gene ID" value="FBgn0028944"/>
</dbReference>
<dbReference type="GeneID" id="34914"/>
<dbReference type="KEGG" id="dme:Dmel_CG11864"/>
<dbReference type="UCSC" id="CG11864-RA">
    <property type="organism name" value="d. melanogaster"/>
</dbReference>
<dbReference type="AGR" id="FB:FBgn0028944"/>
<dbReference type="CTD" id="34914"/>
<dbReference type="FlyBase" id="FBgn0028944">
    <property type="gene designation" value="Semp1"/>
</dbReference>
<dbReference type="VEuPathDB" id="VectorBase:FBgn0028944"/>
<dbReference type="eggNOG" id="KOG3714">
    <property type="taxonomic scope" value="Eukaryota"/>
</dbReference>
<dbReference type="GeneTree" id="ENSGT00940000171076"/>
<dbReference type="HOGENOM" id="CLU_017286_2_3_1"/>
<dbReference type="InParanoid" id="Q9VJN9"/>
<dbReference type="OMA" id="HWPNRTV"/>
<dbReference type="OrthoDB" id="291007at2759"/>
<dbReference type="PhylomeDB" id="Q9VJN9"/>
<dbReference type="BioGRID-ORCS" id="34914">
    <property type="hits" value="0 hits in 3 CRISPR screens"/>
</dbReference>
<dbReference type="GenomeRNAi" id="34914"/>
<dbReference type="PRO" id="PR:Q9VJN9"/>
<dbReference type="Proteomes" id="UP000000803">
    <property type="component" value="Chromosome 2L"/>
</dbReference>
<dbReference type="Bgee" id="FBgn0028944">
    <property type="expression patterns" value="Expressed in spermatid in male reproductive gland and 11 other cell types or tissues"/>
</dbReference>
<dbReference type="ExpressionAtlas" id="Q9VJN9">
    <property type="expression patterns" value="baseline and differential"/>
</dbReference>
<dbReference type="GO" id="GO:0005615">
    <property type="term" value="C:extracellular space"/>
    <property type="evidence" value="ECO:0007005"/>
    <property type="project" value="FlyBase"/>
</dbReference>
<dbReference type="GO" id="GO:0004175">
    <property type="term" value="F:endopeptidase activity"/>
    <property type="evidence" value="ECO:0000315"/>
    <property type="project" value="FlyBase"/>
</dbReference>
<dbReference type="GO" id="GO:0004222">
    <property type="term" value="F:metalloendopeptidase activity"/>
    <property type="evidence" value="ECO:0000250"/>
    <property type="project" value="FlyBase"/>
</dbReference>
<dbReference type="GO" id="GO:0008270">
    <property type="term" value="F:zinc ion binding"/>
    <property type="evidence" value="ECO:0007669"/>
    <property type="project" value="InterPro"/>
</dbReference>
<dbReference type="GO" id="GO:0016477">
    <property type="term" value="P:cell migration"/>
    <property type="evidence" value="ECO:0000315"/>
    <property type="project" value="FlyBase"/>
</dbReference>
<dbReference type="GO" id="GO:0016485">
    <property type="term" value="P:protein processing"/>
    <property type="evidence" value="ECO:0000315"/>
    <property type="project" value="FlyBase"/>
</dbReference>
<dbReference type="GO" id="GO:0006508">
    <property type="term" value="P:proteolysis"/>
    <property type="evidence" value="ECO:0000315"/>
    <property type="project" value="FlyBase"/>
</dbReference>
<dbReference type="GO" id="GO:0019953">
    <property type="term" value="P:sexual reproduction"/>
    <property type="evidence" value="ECO:0007007"/>
    <property type="project" value="FlyBase"/>
</dbReference>
<dbReference type="CDD" id="cd04280">
    <property type="entry name" value="ZnMc_astacin_like"/>
    <property type="match status" value="1"/>
</dbReference>
<dbReference type="FunFam" id="3.40.390.10:FF:000037">
    <property type="entry name" value="Metalloendopeptidase"/>
    <property type="match status" value="1"/>
</dbReference>
<dbReference type="Gene3D" id="3.40.390.10">
    <property type="entry name" value="Collagenase (Catalytic Domain)"/>
    <property type="match status" value="1"/>
</dbReference>
<dbReference type="InterPro" id="IPR034035">
    <property type="entry name" value="Astacin-like_dom"/>
</dbReference>
<dbReference type="InterPro" id="IPR024079">
    <property type="entry name" value="MetalloPept_cat_dom_sf"/>
</dbReference>
<dbReference type="InterPro" id="IPR001506">
    <property type="entry name" value="Peptidase_M12A"/>
</dbReference>
<dbReference type="InterPro" id="IPR006026">
    <property type="entry name" value="Peptidase_Metallo"/>
</dbReference>
<dbReference type="PANTHER" id="PTHR10127">
    <property type="entry name" value="DISCOIDIN, CUB, EGF, LAMININ , AND ZINC METALLOPROTEASE DOMAIN CONTAINING"/>
    <property type="match status" value="1"/>
</dbReference>
<dbReference type="PANTHER" id="PTHR10127:SF814">
    <property type="entry name" value="MEPRIN A SUBUNIT BETA"/>
    <property type="match status" value="1"/>
</dbReference>
<dbReference type="Pfam" id="PF01400">
    <property type="entry name" value="Astacin"/>
    <property type="match status" value="1"/>
</dbReference>
<dbReference type="PRINTS" id="PR00480">
    <property type="entry name" value="ASTACIN"/>
</dbReference>
<dbReference type="SMART" id="SM00235">
    <property type="entry name" value="ZnMc"/>
    <property type="match status" value="1"/>
</dbReference>
<dbReference type="SUPFAM" id="SSF55486">
    <property type="entry name" value="Metalloproteases ('zincins'), catalytic domain"/>
    <property type="match status" value="1"/>
</dbReference>
<dbReference type="PROSITE" id="PS51864">
    <property type="entry name" value="ASTACIN"/>
    <property type="match status" value="1"/>
</dbReference>
<dbReference type="PROSITE" id="PS00142">
    <property type="entry name" value="ZINC_PROTEASE"/>
    <property type="match status" value="1"/>
</dbReference>
<keyword id="KW-1015">Disulfide bond</keyword>
<keyword id="KW-0325">Glycoprotein</keyword>
<keyword id="KW-0378">Hydrolase</keyword>
<keyword id="KW-0479">Metal-binding</keyword>
<keyword id="KW-0482">Metalloprotease</keyword>
<keyword id="KW-0645">Protease</keyword>
<keyword id="KW-1185">Reference proteome</keyword>
<keyword id="KW-0964">Secreted</keyword>
<keyword id="KW-0732">Signal</keyword>
<keyword id="KW-0862">Zinc</keyword>
<keyword id="KW-0865">Zymogen</keyword>
<gene>
    <name evidence="12" type="primary">Semp1</name>
    <name evidence="12" type="ORF">CG11864</name>
</gene>
<sequence length="251" mass="29282">MFPQIWGVIFLFTPTVFSELFKDPELLAGFYQGDIKAHPIRTRNGIVNQIYHWPNRTVPYMIEDDAFADSHYREILRAISIIEENSCVIFKPATEMDFPMALVITSKGLGCNTVHLGYRNKTQVVNLEIYPLGEGCFRIGSIIHELLHVLGFEHQHVSQNRDQYVSIQWKNINPQYNINFVNNDNSTAWHDFDEGYDYESVMHYVPRAFSRNGQPTIVPLREGAENMGQRFYMSEKDIRKLNKMYRCPDHV</sequence>
<name>SEMP1_DROME</name>
<protein>
    <recommendedName>
        <fullName evidence="8">Seminal metalloprotease 1</fullName>
        <ecNumber evidence="4">3.4.24.-</ecNumber>
    </recommendedName>
</protein>
<feature type="signal peptide" evidence="1">
    <location>
        <begin position="1"/>
        <end position="18"/>
    </location>
</feature>
<feature type="propeptide" id="PRO_0000436915" description="Activation peptide" evidence="9">
    <location>
        <begin position="19"/>
        <end status="unknown"/>
    </location>
</feature>
<feature type="chain" id="PRO_5005144955" description="Seminal metalloprotease 1" evidence="9">
    <location>
        <begin status="unknown"/>
        <end position="251"/>
    </location>
</feature>
<feature type="domain" description="Peptidase M12A" evidence="3">
    <location>
        <begin position="44"/>
        <end position="248"/>
    </location>
</feature>
<feature type="active site" evidence="3">
    <location>
        <position position="145"/>
    </location>
</feature>
<feature type="binding site" evidence="3">
    <location>
        <position position="144"/>
    </location>
    <ligand>
        <name>Zn(2+)</name>
        <dbReference type="ChEBI" id="CHEBI:29105"/>
        <note>catalytic</note>
    </ligand>
</feature>
<feature type="binding site" evidence="3">
    <location>
        <position position="148"/>
    </location>
    <ligand>
        <name>Zn(2+)</name>
        <dbReference type="ChEBI" id="CHEBI:29105"/>
        <note>catalytic</note>
    </ligand>
</feature>
<feature type="binding site" evidence="3">
    <location>
        <position position="154"/>
    </location>
    <ligand>
        <name>Zn(2+)</name>
        <dbReference type="ChEBI" id="CHEBI:29105"/>
        <note>catalytic</note>
    </ligand>
</feature>
<feature type="glycosylation site" description="N-linked (GlcNAc...) asparagine" evidence="2">
    <location>
        <position position="55"/>
    </location>
</feature>
<feature type="glycosylation site" description="N-linked (GlcNAc...) asparagine" evidence="2">
    <location>
        <position position="120"/>
    </location>
</feature>
<feature type="glycosylation site" description="N-linked (GlcNAc...) asparagine" evidence="2">
    <location>
        <position position="185"/>
    </location>
</feature>
<feature type="disulfide bond" evidence="3">
    <location>
        <begin position="87"/>
        <end position="247"/>
    </location>
</feature>
<feature type="disulfide bond" evidence="3">
    <location>
        <begin position="111"/>
        <end position="136"/>
    </location>
</feature>
<feature type="mutagenesis site" description="Incomplete processing of Acp26Aa and Semp1 in mated females." evidence="7">
    <original>R</original>
    <variation>A</variation>
    <location>
        <position position="41"/>
    </location>
</feature>
<feature type="mutagenesis site" description="No processing of Acp26Aa in mated females and incomplete processing of Semp1." evidence="7">
    <original>R</original>
    <variation>A</variation>
    <location>
        <position position="43"/>
    </location>
</feature>
<feature type="mutagenesis site" description="Loss of cleavage of Acp26Aa and Acp36DE." evidence="7">
    <original>GI</original>
    <variation>AA</variation>
    <location>
        <begin position="45"/>
        <end position="46"/>
    </location>
</feature>
<feature type="sequence conflict" description="In Ref. 3; AAM29219." evidence="9" ref="3">
    <original>G</original>
    <variation>A</variation>
    <location>
        <position position="7"/>
    </location>
</feature>
<feature type="sequence conflict" description="In Ref. 3; AAM29219." evidence="9" ref="3">
    <original>Y</original>
    <variation>H</variation>
    <location>
        <position position="72"/>
    </location>
</feature>
<feature type="sequence conflict" description="In Ref. 3; AAM29219." evidence="9" ref="3">
    <original>K</original>
    <variation>E</variation>
    <location>
        <position position="170"/>
    </location>
</feature>
<reference evidence="13" key="1">
    <citation type="journal article" date="2000" name="Science">
        <title>The genome sequence of Drosophila melanogaster.</title>
        <authorList>
            <person name="Adams M.D."/>
            <person name="Celniker S.E."/>
            <person name="Holt R.A."/>
            <person name="Evans C.A."/>
            <person name="Gocayne J.D."/>
            <person name="Amanatides P.G."/>
            <person name="Scherer S.E."/>
            <person name="Li P.W."/>
            <person name="Hoskins R.A."/>
            <person name="Galle R.F."/>
            <person name="George R.A."/>
            <person name="Lewis S.E."/>
            <person name="Richards S."/>
            <person name="Ashburner M."/>
            <person name="Henderson S.N."/>
            <person name="Sutton G.G."/>
            <person name="Wortman J.R."/>
            <person name="Yandell M.D."/>
            <person name="Zhang Q."/>
            <person name="Chen L.X."/>
            <person name="Brandon R.C."/>
            <person name="Rogers Y.-H.C."/>
            <person name="Blazej R.G."/>
            <person name="Champe M."/>
            <person name="Pfeiffer B.D."/>
            <person name="Wan K.H."/>
            <person name="Doyle C."/>
            <person name="Baxter E.G."/>
            <person name="Helt G."/>
            <person name="Nelson C.R."/>
            <person name="Miklos G.L.G."/>
            <person name="Abril J.F."/>
            <person name="Agbayani A."/>
            <person name="An H.-J."/>
            <person name="Andrews-Pfannkoch C."/>
            <person name="Baldwin D."/>
            <person name="Ballew R.M."/>
            <person name="Basu A."/>
            <person name="Baxendale J."/>
            <person name="Bayraktaroglu L."/>
            <person name="Beasley E.M."/>
            <person name="Beeson K.Y."/>
            <person name="Benos P.V."/>
            <person name="Berman B.P."/>
            <person name="Bhandari D."/>
            <person name="Bolshakov S."/>
            <person name="Borkova D."/>
            <person name="Botchan M.R."/>
            <person name="Bouck J."/>
            <person name="Brokstein P."/>
            <person name="Brottier P."/>
            <person name="Burtis K.C."/>
            <person name="Busam D.A."/>
            <person name="Butler H."/>
            <person name="Cadieu E."/>
            <person name="Center A."/>
            <person name="Chandra I."/>
            <person name="Cherry J.M."/>
            <person name="Cawley S."/>
            <person name="Dahlke C."/>
            <person name="Davenport L.B."/>
            <person name="Davies P."/>
            <person name="de Pablos B."/>
            <person name="Delcher A."/>
            <person name="Deng Z."/>
            <person name="Mays A.D."/>
            <person name="Dew I."/>
            <person name="Dietz S.M."/>
            <person name="Dodson K."/>
            <person name="Doup L.E."/>
            <person name="Downes M."/>
            <person name="Dugan-Rocha S."/>
            <person name="Dunkov B.C."/>
            <person name="Dunn P."/>
            <person name="Durbin K.J."/>
            <person name="Evangelista C.C."/>
            <person name="Ferraz C."/>
            <person name="Ferriera S."/>
            <person name="Fleischmann W."/>
            <person name="Fosler C."/>
            <person name="Gabrielian A.E."/>
            <person name="Garg N.S."/>
            <person name="Gelbart W.M."/>
            <person name="Glasser K."/>
            <person name="Glodek A."/>
            <person name="Gong F."/>
            <person name="Gorrell J.H."/>
            <person name="Gu Z."/>
            <person name="Guan P."/>
            <person name="Harris M."/>
            <person name="Harris N.L."/>
            <person name="Harvey D.A."/>
            <person name="Heiman T.J."/>
            <person name="Hernandez J.R."/>
            <person name="Houck J."/>
            <person name="Hostin D."/>
            <person name="Houston K.A."/>
            <person name="Howland T.J."/>
            <person name="Wei M.-H."/>
            <person name="Ibegwam C."/>
            <person name="Jalali M."/>
            <person name="Kalush F."/>
            <person name="Karpen G.H."/>
            <person name="Ke Z."/>
            <person name="Kennison J.A."/>
            <person name="Ketchum K.A."/>
            <person name="Kimmel B.E."/>
            <person name="Kodira C.D."/>
            <person name="Kraft C.L."/>
            <person name="Kravitz S."/>
            <person name="Kulp D."/>
            <person name="Lai Z."/>
            <person name="Lasko P."/>
            <person name="Lei Y."/>
            <person name="Levitsky A.A."/>
            <person name="Li J.H."/>
            <person name="Li Z."/>
            <person name="Liang Y."/>
            <person name="Lin X."/>
            <person name="Liu X."/>
            <person name="Mattei B."/>
            <person name="McIntosh T.C."/>
            <person name="McLeod M.P."/>
            <person name="McPherson D."/>
            <person name="Merkulov G."/>
            <person name="Milshina N.V."/>
            <person name="Mobarry C."/>
            <person name="Morris J."/>
            <person name="Moshrefi A."/>
            <person name="Mount S.M."/>
            <person name="Moy M."/>
            <person name="Murphy B."/>
            <person name="Murphy L."/>
            <person name="Muzny D.M."/>
            <person name="Nelson D.L."/>
            <person name="Nelson D.R."/>
            <person name="Nelson K.A."/>
            <person name="Nixon K."/>
            <person name="Nusskern D.R."/>
            <person name="Pacleb J.M."/>
            <person name="Palazzolo M."/>
            <person name="Pittman G.S."/>
            <person name="Pan S."/>
            <person name="Pollard J."/>
            <person name="Puri V."/>
            <person name="Reese M.G."/>
            <person name="Reinert K."/>
            <person name="Remington K."/>
            <person name="Saunders R.D.C."/>
            <person name="Scheeler F."/>
            <person name="Shen H."/>
            <person name="Shue B.C."/>
            <person name="Siden-Kiamos I."/>
            <person name="Simpson M."/>
            <person name="Skupski M.P."/>
            <person name="Smith T.J."/>
            <person name="Spier E."/>
            <person name="Spradling A.C."/>
            <person name="Stapleton M."/>
            <person name="Strong R."/>
            <person name="Sun E."/>
            <person name="Svirskas R."/>
            <person name="Tector C."/>
            <person name="Turner R."/>
            <person name="Venter E."/>
            <person name="Wang A.H."/>
            <person name="Wang X."/>
            <person name="Wang Z.-Y."/>
            <person name="Wassarman D.A."/>
            <person name="Weinstock G.M."/>
            <person name="Weissenbach J."/>
            <person name="Williams S.M."/>
            <person name="Woodage T."/>
            <person name="Worley K.C."/>
            <person name="Wu D."/>
            <person name="Yang S."/>
            <person name="Yao Q.A."/>
            <person name="Ye J."/>
            <person name="Yeh R.-F."/>
            <person name="Zaveri J.S."/>
            <person name="Zhan M."/>
            <person name="Zhang G."/>
            <person name="Zhao Q."/>
            <person name="Zheng L."/>
            <person name="Zheng X.H."/>
            <person name="Zhong F.N."/>
            <person name="Zhong W."/>
            <person name="Zhou X."/>
            <person name="Zhu S.C."/>
            <person name="Zhu X."/>
            <person name="Smith H.O."/>
            <person name="Gibbs R.A."/>
            <person name="Myers E.W."/>
            <person name="Rubin G.M."/>
            <person name="Venter J.C."/>
        </authorList>
    </citation>
    <scope>NUCLEOTIDE SEQUENCE [LARGE SCALE GENOMIC DNA]</scope>
    <source>
        <strain evidence="13">Berkeley</strain>
    </source>
</reference>
<reference evidence="13" key="2">
    <citation type="journal article" date="2002" name="Genome Biol.">
        <title>Annotation of the Drosophila melanogaster euchromatic genome: a systematic review.</title>
        <authorList>
            <person name="Misra S."/>
            <person name="Crosby M.A."/>
            <person name="Mungall C.J."/>
            <person name="Matthews B.B."/>
            <person name="Campbell K.S."/>
            <person name="Hradecky P."/>
            <person name="Huang Y."/>
            <person name="Kaminker J.S."/>
            <person name="Millburn G.H."/>
            <person name="Prochnik S.E."/>
            <person name="Smith C.D."/>
            <person name="Tupy J.L."/>
            <person name="Whitfield E.J."/>
            <person name="Bayraktaroglu L."/>
            <person name="Berman B.P."/>
            <person name="Bettencourt B.R."/>
            <person name="Celniker S.E."/>
            <person name="de Grey A.D.N.J."/>
            <person name="Drysdale R.A."/>
            <person name="Harris N.L."/>
            <person name="Richter J."/>
            <person name="Russo S."/>
            <person name="Schroeder A.J."/>
            <person name="Shu S.Q."/>
            <person name="Stapleton M."/>
            <person name="Yamada C."/>
            <person name="Ashburner M."/>
            <person name="Gelbart W.M."/>
            <person name="Rubin G.M."/>
            <person name="Lewis S.E."/>
        </authorList>
    </citation>
    <scope>GENOME REANNOTATION</scope>
    <source>
        <strain evidence="13">Berkeley</strain>
    </source>
</reference>
<reference evidence="10" key="3">
    <citation type="journal article" date="2002" name="Genome Biol.">
        <title>A Drosophila full-length cDNA resource.</title>
        <authorList>
            <person name="Stapleton M."/>
            <person name="Carlson J.W."/>
            <person name="Brokstein P."/>
            <person name="Yu C."/>
            <person name="Champe M."/>
            <person name="George R.A."/>
            <person name="Guarin H."/>
            <person name="Kronmiller B."/>
            <person name="Pacleb J.M."/>
            <person name="Park S."/>
            <person name="Wan K.H."/>
            <person name="Rubin G.M."/>
            <person name="Celniker S.E."/>
        </authorList>
    </citation>
    <scope>NUCLEOTIDE SEQUENCE [LARGE SCALE MRNA]</scope>
    <source>
        <strain evidence="10">Berkeley</strain>
        <tissue evidence="10">Testis</tissue>
    </source>
</reference>
<reference evidence="11" key="4">
    <citation type="submission" date="2013-06" db="EMBL/GenBank/DDBJ databases">
        <authorList>
            <person name="Carlson J."/>
            <person name="Booth B."/>
            <person name="Frise E."/>
            <person name="Park S."/>
            <person name="Wan K."/>
            <person name="Yu C."/>
            <person name="Celniker S."/>
        </authorList>
    </citation>
    <scope>NUCLEOTIDE SEQUENCE [LARGE SCALE MRNA]</scope>
    <source>
        <strain evidence="11">Berkeley</strain>
    </source>
</reference>
<reference evidence="9" key="5">
    <citation type="journal article" date="2005" name="Insect Biochem. Mol. Biol.">
        <title>Fates and targets of male accessory gland proteins in mated female Drosophila melanogaster.</title>
        <authorList>
            <person name="Ravi Ram K."/>
            <person name="Ji S."/>
            <person name="Wolfner M.F."/>
        </authorList>
    </citation>
    <scope>FUNCTION</scope>
    <scope>SUBCELLULAR LOCATION</scope>
    <scope>TISSUE SPECIFICITY</scope>
    <scope>CLEAVAGE</scope>
</reference>
<reference evidence="9" key="6">
    <citation type="journal article" date="2006" name="Proc. Natl. Acad. Sci. U.S.A.">
        <title>Predicted seminal astacin-like protease is required for processing of reproductive proteins in Drosophila melanogaster.</title>
        <authorList>
            <person name="Ravi Ram K."/>
            <person name="Sirot L.K."/>
            <person name="Wolfner M.F."/>
        </authorList>
    </citation>
    <scope>FUNCTION</scope>
    <scope>SUBCELLULAR LOCATION</scope>
    <scope>CLEAVAGE</scope>
    <scope>DISRUPTION PHENOTYPE</scope>
</reference>
<reference evidence="9" key="7">
    <citation type="journal article" date="2014" name="Genetics">
        <title>A Drosophila protease cascade member, seminal metalloprotease-1, is activated stepwise by male factors and requires female factors for full activity.</title>
        <authorList>
            <person name="Laflamme B.A."/>
            <person name="Avila F.W."/>
            <person name="Michalski K."/>
            <person name="Wolfner M.F."/>
        </authorList>
    </citation>
    <scope>FUNCTION</scope>
    <scope>CLEAVAGE</scope>
    <scope>DISRUPTION PHENOTYPE</scope>
    <scope>MUTAGENESIS OF ARG-41; ARG-43 AND 45-GLY-ILE-46</scope>
</reference>
<evidence type="ECO:0000255" key="1"/>
<evidence type="ECO:0000255" key="2">
    <source>
        <dbReference type="PROSITE-ProRule" id="PRU00498"/>
    </source>
</evidence>
<evidence type="ECO:0000255" key="3">
    <source>
        <dbReference type="PROSITE-ProRule" id="PRU01211"/>
    </source>
</evidence>
<evidence type="ECO:0000255" key="4">
    <source>
        <dbReference type="RuleBase" id="RU361183"/>
    </source>
</evidence>
<evidence type="ECO:0000269" key="5">
    <source>
    </source>
</evidence>
<evidence type="ECO:0000269" key="6">
    <source>
    </source>
</evidence>
<evidence type="ECO:0000269" key="7">
    <source>
    </source>
</evidence>
<evidence type="ECO:0000303" key="8">
    <source>
    </source>
</evidence>
<evidence type="ECO:0000305" key="9"/>
<evidence type="ECO:0000312" key="10">
    <source>
        <dbReference type="EMBL" id="AAM29219.1"/>
    </source>
</evidence>
<evidence type="ECO:0000312" key="11">
    <source>
        <dbReference type="EMBL" id="AGO63477.1"/>
    </source>
</evidence>
<evidence type="ECO:0000312" key="12">
    <source>
        <dbReference type="FlyBase" id="FBgn0028944"/>
    </source>
</evidence>
<evidence type="ECO:0000312" key="13">
    <source>
        <dbReference type="Proteomes" id="UP000000803"/>
    </source>
</evidence>
<proteinExistence type="evidence at protein level"/>
<comment type="function">
    <text evidence="5 6 7">Seminal fluid metalloprotease which is transferred to females during mating and is required for processing of two other seminal fluid proteins Acp26Aa and Acp36DE in mated females.</text>
</comment>
<comment type="cofactor">
    <cofactor evidence="3">
        <name>Zn(2+)</name>
        <dbReference type="ChEBI" id="CHEBI:29105"/>
    </cofactor>
    <text evidence="3">Binds 1 zinc ion per subunit.</text>
</comment>
<comment type="subcellular location">
    <subcellularLocation>
        <location evidence="5 6">Secreted</location>
    </subcellularLocation>
    <text evidence="5 6">Secreted into seminal fluid.</text>
</comment>
<comment type="tissue specificity">
    <text evidence="5">Produced in the male accessory glands and secreted into seminal fluid. In mated females, confined to the reproductive tract and also detected in eggs laid by mated females (at protein level).</text>
</comment>
<comment type="PTM">
    <text evidence="5 6 7">Undergoes cleavage in the male during mating with a cleaved product detected in the ejaculatory duct and/or bulb of males by 8-10 minutes after the start of mating (PubMed:17116868). Further cleavage occurs in the mated female (PubMed:15979005). May undergo cleavage in a two-step process where it is first cleaved by Sems, making it susceptible to activational cleavage which may be carried out by another protease or by autocleavage (PubMed:24514904).</text>
</comment>
<comment type="disruption phenotype">
    <text evidence="6 7">Loss of cleavage of accessory gland proteins Acp26Aa and Acp36DE in females mated with mutant males (PubMed:24514904). RNAi-mediated knockdown in males results in incomplete and delayed processing of Acp26Aa and Acp36DE in females mated with these males.</text>
</comment>
<comment type="sequence caution" evidence="9">
    <conflict type="erroneous initiation">
        <sequence resource="EMBL-CDS" id="AGO63477"/>
    </conflict>
    <text>Extended N-terminus.</text>
</comment>
<organism evidence="13">
    <name type="scientific">Drosophila melanogaster</name>
    <name type="common">Fruit fly</name>
    <dbReference type="NCBI Taxonomy" id="7227"/>
    <lineage>
        <taxon>Eukaryota</taxon>
        <taxon>Metazoa</taxon>
        <taxon>Ecdysozoa</taxon>
        <taxon>Arthropoda</taxon>
        <taxon>Hexapoda</taxon>
        <taxon>Insecta</taxon>
        <taxon>Pterygota</taxon>
        <taxon>Neoptera</taxon>
        <taxon>Endopterygota</taxon>
        <taxon>Diptera</taxon>
        <taxon>Brachycera</taxon>
        <taxon>Muscomorpha</taxon>
        <taxon>Ephydroidea</taxon>
        <taxon>Drosophilidae</taxon>
        <taxon>Drosophila</taxon>
        <taxon>Sophophora</taxon>
    </lineage>
</organism>
<accession>Q9VJN9</accession>
<accession>Q8MZE8</accession>
<accession>S0ASJ3</accession>